<feature type="chain" id="PRO_1000214490" description="DNA-directed RNA polymerase subunit beta">
    <location>
        <begin position="1"/>
        <end position="1342"/>
    </location>
</feature>
<proteinExistence type="inferred from homology"/>
<accession>C4LBV2</accession>
<reference key="1">
    <citation type="submission" date="2009-05" db="EMBL/GenBank/DDBJ databases">
        <title>Complete sequence of Tolumonas auensis DSM 9187.</title>
        <authorList>
            <consortium name="US DOE Joint Genome Institute"/>
            <person name="Lucas S."/>
            <person name="Copeland A."/>
            <person name="Lapidus A."/>
            <person name="Glavina del Rio T."/>
            <person name="Tice H."/>
            <person name="Bruce D."/>
            <person name="Goodwin L."/>
            <person name="Pitluck S."/>
            <person name="Chertkov O."/>
            <person name="Brettin T."/>
            <person name="Detter J.C."/>
            <person name="Han C."/>
            <person name="Larimer F."/>
            <person name="Land M."/>
            <person name="Hauser L."/>
            <person name="Kyrpides N."/>
            <person name="Mikhailova N."/>
            <person name="Spring S."/>
            <person name="Beller H."/>
        </authorList>
    </citation>
    <scope>NUCLEOTIDE SEQUENCE [LARGE SCALE GENOMIC DNA]</scope>
    <source>
        <strain>DSM 9187 / NBRC 110442 / TA 4</strain>
    </source>
</reference>
<name>RPOB_TOLAT</name>
<dbReference type="EC" id="2.7.7.6" evidence="1"/>
<dbReference type="EMBL" id="CP001616">
    <property type="protein sequence ID" value="ACQ94376.1"/>
    <property type="molecule type" value="Genomic_DNA"/>
</dbReference>
<dbReference type="RefSeq" id="WP_015879825.1">
    <property type="nucleotide sequence ID" value="NC_012691.1"/>
</dbReference>
<dbReference type="SMR" id="C4LBV2"/>
<dbReference type="STRING" id="595494.Tola_2783"/>
<dbReference type="KEGG" id="tau:Tola_2783"/>
<dbReference type="eggNOG" id="COG0085">
    <property type="taxonomic scope" value="Bacteria"/>
</dbReference>
<dbReference type="HOGENOM" id="CLU_000524_4_3_6"/>
<dbReference type="OrthoDB" id="9803954at2"/>
<dbReference type="Proteomes" id="UP000009073">
    <property type="component" value="Chromosome"/>
</dbReference>
<dbReference type="GO" id="GO:0000428">
    <property type="term" value="C:DNA-directed RNA polymerase complex"/>
    <property type="evidence" value="ECO:0007669"/>
    <property type="project" value="UniProtKB-KW"/>
</dbReference>
<dbReference type="GO" id="GO:0003677">
    <property type="term" value="F:DNA binding"/>
    <property type="evidence" value="ECO:0007669"/>
    <property type="project" value="UniProtKB-UniRule"/>
</dbReference>
<dbReference type="GO" id="GO:0003899">
    <property type="term" value="F:DNA-directed RNA polymerase activity"/>
    <property type="evidence" value="ECO:0007669"/>
    <property type="project" value="UniProtKB-UniRule"/>
</dbReference>
<dbReference type="GO" id="GO:0032549">
    <property type="term" value="F:ribonucleoside binding"/>
    <property type="evidence" value="ECO:0007669"/>
    <property type="project" value="InterPro"/>
</dbReference>
<dbReference type="GO" id="GO:0006351">
    <property type="term" value="P:DNA-templated transcription"/>
    <property type="evidence" value="ECO:0007669"/>
    <property type="project" value="UniProtKB-UniRule"/>
</dbReference>
<dbReference type="CDD" id="cd00653">
    <property type="entry name" value="RNA_pol_B_RPB2"/>
    <property type="match status" value="1"/>
</dbReference>
<dbReference type="FunFam" id="2.40.270.10:FF:000003">
    <property type="entry name" value="DNA-directed RNA polymerase subunit beta"/>
    <property type="match status" value="1"/>
</dbReference>
<dbReference type="FunFam" id="2.40.270.10:FF:000004">
    <property type="entry name" value="DNA-directed RNA polymerase subunit beta"/>
    <property type="match status" value="1"/>
</dbReference>
<dbReference type="FunFam" id="2.40.50.100:FF:000006">
    <property type="entry name" value="DNA-directed RNA polymerase subunit beta"/>
    <property type="match status" value="1"/>
</dbReference>
<dbReference type="FunFam" id="2.40.50.150:FF:000001">
    <property type="entry name" value="DNA-directed RNA polymerase subunit beta"/>
    <property type="match status" value="1"/>
</dbReference>
<dbReference type="FunFam" id="3.90.1100.10:FF:000002">
    <property type="entry name" value="DNA-directed RNA polymerase subunit beta"/>
    <property type="match status" value="1"/>
</dbReference>
<dbReference type="FunFam" id="3.90.1110.10:FF:000001">
    <property type="entry name" value="DNA-directed RNA polymerase subunit beta"/>
    <property type="match status" value="1"/>
</dbReference>
<dbReference type="FunFam" id="3.90.1110.10:FF:000004">
    <property type="entry name" value="DNA-directed RNA polymerase subunit beta"/>
    <property type="match status" value="1"/>
</dbReference>
<dbReference type="FunFam" id="3.90.1800.10:FF:000001">
    <property type="entry name" value="DNA-directed RNA polymerase subunit beta"/>
    <property type="match status" value="1"/>
</dbReference>
<dbReference type="Gene3D" id="2.40.50.100">
    <property type="match status" value="1"/>
</dbReference>
<dbReference type="Gene3D" id="2.40.50.150">
    <property type="match status" value="1"/>
</dbReference>
<dbReference type="Gene3D" id="3.90.1100.10">
    <property type="match status" value="2"/>
</dbReference>
<dbReference type="Gene3D" id="2.30.150.10">
    <property type="entry name" value="DNA-directed RNA polymerase, beta subunit, external 1 domain"/>
    <property type="match status" value="1"/>
</dbReference>
<dbReference type="Gene3D" id="2.40.270.10">
    <property type="entry name" value="DNA-directed RNA polymerase, subunit 2, domain 6"/>
    <property type="match status" value="1"/>
</dbReference>
<dbReference type="Gene3D" id="3.90.1800.10">
    <property type="entry name" value="RNA polymerase alpha subunit dimerisation domain"/>
    <property type="match status" value="1"/>
</dbReference>
<dbReference type="Gene3D" id="3.90.1110.10">
    <property type="entry name" value="RNA polymerase Rpb2, domain 2"/>
    <property type="match status" value="1"/>
</dbReference>
<dbReference type="HAMAP" id="MF_01321">
    <property type="entry name" value="RNApol_bact_RpoB"/>
    <property type="match status" value="1"/>
</dbReference>
<dbReference type="InterPro" id="IPR042107">
    <property type="entry name" value="DNA-dir_RNA_pol_bsu_ext_1_sf"/>
</dbReference>
<dbReference type="InterPro" id="IPR019462">
    <property type="entry name" value="DNA-dir_RNA_pol_bsu_external_1"/>
</dbReference>
<dbReference type="InterPro" id="IPR015712">
    <property type="entry name" value="DNA-dir_RNA_pol_su2"/>
</dbReference>
<dbReference type="InterPro" id="IPR007120">
    <property type="entry name" value="DNA-dir_RNAP_su2_dom"/>
</dbReference>
<dbReference type="InterPro" id="IPR037033">
    <property type="entry name" value="DNA-dir_RNAP_su2_hyb_sf"/>
</dbReference>
<dbReference type="InterPro" id="IPR010243">
    <property type="entry name" value="RNA_pol_bsu_bac"/>
</dbReference>
<dbReference type="InterPro" id="IPR007121">
    <property type="entry name" value="RNA_pol_bsu_CS"/>
</dbReference>
<dbReference type="InterPro" id="IPR007644">
    <property type="entry name" value="RNA_pol_bsu_protrusion"/>
</dbReference>
<dbReference type="InterPro" id="IPR007642">
    <property type="entry name" value="RNA_pol_Rpb2_2"/>
</dbReference>
<dbReference type="InterPro" id="IPR037034">
    <property type="entry name" value="RNA_pol_Rpb2_2_sf"/>
</dbReference>
<dbReference type="InterPro" id="IPR007645">
    <property type="entry name" value="RNA_pol_Rpb2_3"/>
</dbReference>
<dbReference type="InterPro" id="IPR007641">
    <property type="entry name" value="RNA_pol_Rpb2_7"/>
</dbReference>
<dbReference type="InterPro" id="IPR014724">
    <property type="entry name" value="RNA_pol_RPB2_OB-fold"/>
</dbReference>
<dbReference type="NCBIfam" id="NF001616">
    <property type="entry name" value="PRK00405.1"/>
    <property type="match status" value="1"/>
</dbReference>
<dbReference type="NCBIfam" id="TIGR02013">
    <property type="entry name" value="rpoB"/>
    <property type="match status" value="1"/>
</dbReference>
<dbReference type="PANTHER" id="PTHR20856">
    <property type="entry name" value="DNA-DIRECTED RNA POLYMERASE I SUBUNIT 2"/>
    <property type="match status" value="1"/>
</dbReference>
<dbReference type="Pfam" id="PF04563">
    <property type="entry name" value="RNA_pol_Rpb2_1"/>
    <property type="match status" value="1"/>
</dbReference>
<dbReference type="Pfam" id="PF04561">
    <property type="entry name" value="RNA_pol_Rpb2_2"/>
    <property type="match status" value="2"/>
</dbReference>
<dbReference type="Pfam" id="PF04565">
    <property type="entry name" value="RNA_pol_Rpb2_3"/>
    <property type="match status" value="1"/>
</dbReference>
<dbReference type="Pfam" id="PF10385">
    <property type="entry name" value="RNA_pol_Rpb2_45"/>
    <property type="match status" value="1"/>
</dbReference>
<dbReference type="Pfam" id="PF00562">
    <property type="entry name" value="RNA_pol_Rpb2_6"/>
    <property type="match status" value="1"/>
</dbReference>
<dbReference type="Pfam" id="PF04560">
    <property type="entry name" value="RNA_pol_Rpb2_7"/>
    <property type="match status" value="1"/>
</dbReference>
<dbReference type="SUPFAM" id="SSF64484">
    <property type="entry name" value="beta and beta-prime subunits of DNA dependent RNA-polymerase"/>
    <property type="match status" value="1"/>
</dbReference>
<dbReference type="PROSITE" id="PS01166">
    <property type="entry name" value="RNA_POL_BETA"/>
    <property type="match status" value="1"/>
</dbReference>
<evidence type="ECO:0000255" key="1">
    <source>
        <dbReference type="HAMAP-Rule" id="MF_01321"/>
    </source>
</evidence>
<comment type="function">
    <text evidence="1">DNA-dependent RNA polymerase catalyzes the transcription of DNA into RNA using the four ribonucleoside triphosphates as substrates.</text>
</comment>
<comment type="catalytic activity">
    <reaction evidence="1">
        <text>RNA(n) + a ribonucleoside 5'-triphosphate = RNA(n+1) + diphosphate</text>
        <dbReference type="Rhea" id="RHEA:21248"/>
        <dbReference type="Rhea" id="RHEA-COMP:14527"/>
        <dbReference type="Rhea" id="RHEA-COMP:17342"/>
        <dbReference type="ChEBI" id="CHEBI:33019"/>
        <dbReference type="ChEBI" id="CHEBI:61557"/>
        <dbReference type="ChEBI" id="CHEBI:140395"/>
        <dbReference type="EC" id="2.7.7.6"/>
    </reaction>
</comment>
<comment type="subunit">
    <text evidence="1">The RNAP catalytic core consists of 2 alpha, 1 beta, 1 beta' and 1 omega subunit. When a sigma factor is associated with the core the holoenzyme is formed, which can initiate transcription.</text>
</comment>
<comment type="similarity">
    <text evidence="1">Belongs to the RNA polymerase beta chain family.</text>
</comment>
<organism>
    <name type="scientific">Tolumonas auensis (strain DSM 9187 / NBRC 110442 / TA 4)</name>
    <dbReference type="NCBI Taxonomy" id="595494"/>
    <lineage>
        <taxon>Bacteria</taxon>
        <taxon>Pseudomonadati</taxon>
        <taxon>Pseudomonadota</taxon>
        <taxon>Gammaproteobacteria</taxon>
        <taxon>Aeromonadales</taxon>
        <taxon>Aeromonadaceae</taxon>
        <taxon>Tolumonas</taxon>
    </lineage>
</organism>
<protein>
    <recommendedName>
        <fullName evidence="1">DNA-directed RNA polymerase subunit beta</fullName>
        <shortName evidence="1">RNAP subunit beta</shortName>
        <ecNumber evidence="1">2.7.7.6</ecNumber>
    </recommendedName>
    <alternativeName>
        <fullName evidence="1">RNA polymerase subunit beta</fullName>
    </alternativeName>
    <alternativeName>
        <fullName evidence="1">Transcriptase subunit beta</fullName>
    </alternativeName>
</protein>
<sequence>MVNSYTEKKRIRKDFGKRDQVLETPYLLSIQLDSFKQFLDADPEGAYGLEAAFRSVFPITSYSGTAELQYVSYRLGEPVFDVKECQIRGVTYSAPLRVKLRLVLFDKEAAAGTVKEIKEQEVYMGEIPLMTDNGTFVINGTERVIVSQLHRSPGVFFDHDKGKTHSSGKVLYNARVIPYRGSWLDFEFDAKDNLFVRIDRRRKLPATIILRALEFTTEEILTTFFETIKFEIKDGKVLMELVPERLRGETATFDIVAGGDVVVEKGRRITARHIRQLEKAGISQIEVPVEYVVGKISARDYVNPQTGEVMINANTALSLEAIANLSQAGFKQFEVLFTNELDHGSYISETLRIDSSTNRLEALVEIYRMMRPGEPPTKDAAEQLFENLFFSADRYDLSTVGRMKFNSRLARPDHIGSGILSQDDIVDVMKQLIAIRNGKDDVDDIDHLGNRRIRSVGEMAENQFRVGLVRVERAVKERLSLGDLDAIQPQDLINAKPISAAVKEFFGSSQLSQFMDQNNPLSEITHKRRISALGPGGLTRERAGFEVRDVHPTHYGRLCPIETPEGPNIGLINSLAVYSRTNEYGFLETPYRKVIDGVITDEVDYLSAIEEGNFVIAQANANVDADARLKDELIPCRHKGESTFMNAEQIQYMDVSPQQVVSVAASLIPFLEHDDANRALMGSNMQRQAVPTLRADKPLVGTGMERAVAVDSGVTVVAKRGGTIDYVDASRIVVKVNEDELLPGEAGIDIYNLTKYTRSNQNTCINQRPCVSVGEPVMLGDVLADGPSTDLGELALGQNMRVAFMPWNGYNFEDSILVSERVVQEDRLTTIHIQELSCIARDTKLGPEEITADIPNVGEAALSKLDESGIVYVGAEVKGGDILVGKVTPKGETQLTPEEKLLRAIFGEKASDVKDSSLRVPNGVYGTVIDVQVFTRDGVEKDKRAKEVEDMQLRDAKKDLTEEFKILEDGIFGRARSLLIANGFGEDRLSKLDRKRWLEQSLDDEGKQVELEQIAEQHIALKEEFDRKFEAKRQKIIQGDDLAPGVLKIVKVYLAVKRRIQPGDKMAGRHGNKGVISKICPVEDMPYDDEGNPVDIVLNPLGVPSRMNIGQILEVHLGLAAKGIGEKIDRMVKEQRELAELREFLQRVYDLGGSDQQQIDIATLSDDDVRTLVQNLRKGLPVATPVFDGAKESEIKELLKLADKPESGQITLFDGRTGMPFERVVTVGYMYMLKLNHLVDDKMHARSTGSYSLVTQQPLGGKAQFGGQRFGEMEVWALEAYGAAYTLQEMLTVKSDDVNGRTKMYKNIVDGDHRMEPGIPESFNVLLKEIRSLGINIELEEE</sequence>
<gene>
    <name evidence="1" type="primary">rpoB</name>
    <name type="ordered locus">Tola_2783</name>
</gene>
<keyword id="KW-0240">DNA-directed RNA polymerase</keyword>
<keyword id="KW-0548">Nucleotidyltransferase</keyword>
<keyword id="KW-1185">Reference proteome</keyword>
<keyword id="KW-0804">Transcription</keyword>
<keyword id="KW-0808">Transferase</keyword>